<sequence>MKYNANTSNQFRAMFFKNATFLKRQKCSLGVQIAIPMALVIVLVILKLWIESQIENNSGPVGDSSGDDIMGSYISYKFDYMQGWFYTINPNNITNIGYKDGYGNGTGLLGGINQYEIYWNGSDLWVPYTVAVESGQKMNDMVLAQKQQLGQSSMGPLTFPIAGIQFNEFNPQNNLIDLTITCEQQIRYAYNNFENNLIYVLSQIQTSFINYLLNGNGVVVKTQISTLPYIYKSQQFDIASLLGGSFFPFALSFVLPLFMYSIVYEKQEKLRDLSLMMGLKMRNYWIMTFIFNFLTYVVIVSVISLICSAAKVSLFVKGSPFALFLLLFLWGLSMVSFAFFLSTFFKRTRAASIFGYFFVMVMVNLNSTLSLFNTSVPVFYYWVPILAFSRGISTLCGLCGNGLCPPLSQYTWDFELSRILFWLFIDTIVYLTLAVYLDKVLPREFGVPSHPLFFIKDLKELFSKKGKYRKLRDGDGINEKTKLINEYTIDGINNDDDDDGLMDEDVKKERDMIVKGEYNPEEMTLIVQGLRKQFPGRPKPALSNLYLSVKKGEVLGYLGPNGAGKTTSISILTGLYTPTSGTAHIAGLDIRYDMDKIHQVIGVVMQFDVLWEDLTCEETILYYTRLKGTPKSIEFESTHNILKEVNLLDVKDRFVKELSGGMKRRLSFAIAMTGESSIIFLDEPTTGLSIETRKDLWGTINELKKNRSIILTTHSMQEADILSDRIAIVSQGKLQCIGTQTHLKQKFGDGYSVRIDIQEDYQNTHNPTDLIKSFSPSATLSETFNGSYVYRLPKDSIISDLYEYLVLNKEQYHLQEWSLSQTSLEDVFLKISANDDTVN</sequence>
<comment type="subcellular location">
    <subcellularLocation>
        <location evidence="3">Membrane</location>
        <topology evidence="3">Multi-pass membrane protein</topology>
    </subcellularLocation>
</comment>
<comment type="similarity">
    <text evidence="3">Belongs to the ABC transporter superfamily. ABCA family.</text>
</comment>
<reference key="1">
    <citation type="journal article" date="2002" name="Eukaryot. Cell">
        <title>Evolutionary analyses of ABC transporters of Dictyostelium discoideum.</title>
        <authorList>
            <person name="Anjard C."/>
            <person name="Loomis W.F."/>
        </authorList>
    </citation>
    <scope>NUCLEOTIDE SEQUENCE [GENOMIC DNA]</scope>
    <scope>NOMENCLATURE</scope>
    <source>
        <strain>AX4</strain>
    </source>
</reference>
<reference key="2">
    <citation type="journal article" date="2002" name="Nature">
        <title>Sequence and analysis of chromosome 2 of Dictyostelium discoideum.</title>
        <authorList>
            <person name="Gloeckner G."/>
            <person name="Eichinger L."/>
            <person name="Szafranski K."/>
            <person name="Pachebat J.A."/>
            <person name="Bankier A.T."/>
            <person name="Dear P.H."/>
            <person name="Lehmann R."/>
            <person name="Baumgart C."/>
            <person name="Parra G."/>
            <person name="Abril J.F."/>
            <person name="Guigo R."/>
            <person name="Kumpf K."/>
            <person name="Tunggal B."/>
            <person name="Cox E.C."/>
            <person name="Quail M.A."/>
            <person name="Platzer M."/>
            <person name="Rosenthal A."/>
            <person name="Noegel A.A."/>
        </authorList>
    </citation>
    <scope>NUCLEOTIDE SEQUENCE [LARGE SCALE GENOMIC DNA]</scope>
    <source>
        <strain>AX4</strain>
    </source>
</reference>
<reference key="3">
    <citation type="journal article" date="2005" name="Nature">
        <title>The genome of the social amoeba Dictyostelium discoideum.</title>
        <authorList>
            <person name="Eichinger L."/>
            <person name="Pachebat J.A."/>
            <person name="Gloeckner G."/>
            <person name="Rajandream M.A."/>
            <person name="Sucgang R."/>
            <person name="Berriman M."/>
            <person name="Song J."/>
            <person name="Olsen R."/>
            <person name="Szafranski K."/>
            <person name="Xu Q."/>
            <person name="Tunggal B."/>
            <person name="Kummerfeld S."/>
            <person name="Madera M."/>
            <person name="Konfortov B.A."/>
            <person name="Rivero F."/>
            <person name="Bankier A.T."/>
            <person name="Lehmann R."/>
            <person name="Hamlin N."/>
            <person name="Davies R."/>
            <person name="Gaudet P."/>
            <person name="Fey P."/>
            <person name="Pilcher K."/>
            <person name="Chen G."/>
            <person name="Saunders D."/>
            <person name="Sodergren E.J."/>
            <person name="Davis P."/>
            <person name="Kerhornou A."/>
            <person name="Nie X."/>
            <person name="Hall N."/>
            <person name="Anjard C."/>
            <person name="Hemphill L."/>
            <person name="Bason N."/>
            <person name="Farbrother P."/>
            <person name="Desany B."/>
            <person name="Just E."/>
            <person name="Morio T."/>
            <person name="Rost R."/>
            <person name="Churcher C.M."/>
            <person name="Cooper J."/>
            <person name="Haydock S."/>
            <person name="van Driessche N."/>
            <person name="Cronin A."/>
            <person name="Goodhead I."/>
            <person name="Muzny D.M."/>
            <person name="Mourier T."/>
            <person name="Pain A."/>
            <person name="Lu M."/>
            <person name="Harper D."/>
            <person name="Lindsay R."/>
            <person name="Hauser H."/>
            <person name="James K.D."/>
            <person name="Quiles M."/>
            <person name="Madan Babu M."/>
            <person name="Saito T."/>
            <person name="Buchrieser C."/>
            <person name="Wardroper A."/>
            <person name="Felder M."/>
            <person name="Thangavelu M."/>
            <person name="Johnson D."/>
            <person name="Knights A."/>
            <person name="Loulseged H."/>
            <person name="Mungall K.L."/>
            <person name="Oliver K."/>
            <person name="Price C."/>
            <person name="Quail M.A."/>
            <person name="Urushihara H."/>
            <person name="Hernandez J."/>
            <person name="Rabbinowitsch E."/>
            <person name="Steffen D."/>
            <person name="Sanders M."/>
            <person name="Ma J."/>
            <person name="Kohara Y."/>
            <person name="Sharp S."/>
            <person name="Simmonds M.N."/>
            <person name="Spiegler S."/>
            <person name="Tivey A."/>
            <person name="Sugano S."/>
            <person name="White B."/>
            <person name="Walker D."/>
            <person name="Woodward J.R."/>
            <person name="Winckler T."/>
            <person name="Tanaka Y."/>
            <person name="Shaulsky G."/>
            <person name="Schleicher M."/>
            <person name="Weinstock G.M."/>
            <person name="Rosenthal A."/>
            <person name="Cox E.C."/>
            <person name="Chisholm R.L."/>
            <person name="Gibbs R.A."/>
            <person name="Loomis W.F."/>
            <person name="Platzer M."/>
            <person name="Kay R.R."/>
            <person name="Williams J.G."/>
            <person name="Dear P.H."/>
            <person name="Noegel A.A."/>
            <person name="Barrell B.G."/>
            <person name="Kuspa A."/>
        </authorList>
    </citation>
    <scope>NUCLEOTIDE SEQUENCE [LARGE SCALE GENOMIC DNA]</scope>
    <source>
        <strain>AX4</strain>
    </source>
</reference>
<keyword id="KW-0067">ATP-binding</keyword>
<keyword id="KW-0472">Membrane</keyword>
<keyword id="KW-0547">Nucleotide-binding</keyword>
<keyword id="KW-1185">Reference proteome</keyword>
<keyword id="KW-0812">Transmembrane</keyword>
<keyword id="KW-1133">Transmembrane helix</keyword>
<keyword id="KW-0813">Transport</keyword>
<proteinExistence type="inferred from homology"/>
<gene>
    <name type="primary">abcA7</name>
    <name type="ORF">DDB_G0271140</name>
</gene>
<protein>
    <recommendedName>
        <fullName>ABC transporter A family member 7</fullName>
    </recommendedName>
    <alternativeName>
        <fullName>ABC transporter ABCA.7</fullName>
    </alternativeName>
</protein>
<evidence type="ECO:0000255" key="1"/>
<evidence type="ECO:0000255" key="2">
    <source>
        <dbReference type="PROSITE-ProRule" id="PRU00434"/>
    </source>
</evidence>
<evidence type="ECO:0000305" key="3"/>
<name>ABCA7_DICDI</name>
<organism>
    <name type="scientific">Dictyostelium discoideum</name>
    <name type="common">Social amoeba</name>
    <dbReference type="NCBI Taxonomy" id="44689"/>
    <lineage>
        <taxon>Eukaryota</taxon>
        <taxon>Amoebozoa</taxon>
        <taxon>Evosea</taxon>
        <taxon>Eumycetozoa</taxon>
        <taxon>Dictyostelia</taxon>
        <taxon>Dictyosteliales</taxon>
        <taxon>Dictyosteliaceae</taxon>
        <taxon>Dictyostelium</taxon>
    </lineage>
</organism>
<dbReference type="EMBL" id="AF465309">
    <property type="protein sequence ID" value="AAL85300.1"/>
    <property type="molecule type" value="Genomic_DNA"/>
</dbReference>
<dbReference type="EMBL" id="AAFI02000006">
    <property type="protein sequence ID" value="EAL71700.1"/>
    <property type="molecule type" value="Genomic_DNA"/>
</dbReference>
<dbReference type="RefSeq" id="XP_645693.1">
    <property type="nucleotide sequence ID" value="XM_640601.1"/>
</dbReference>
<dbReference type="SMR" id="Q8T6J0"/>
<dbReference type="FunCoup" id="Q8T6J0">
    <property type="interactions" value="97"/>
</dbReference>
<dbReference type="STRING" id="44689.Q8T6J0"/>
<dbReference type="PaxDb" id="44689-DDB0215337"/>
<dbReference type="EnsemblProtists" id="EAL71700">
    <property type="protein sequence ID" value="EAL71700"/>
    <property type="gene ID" value="DDB_G0271140"/>
</dbReference>
<dbReference type="GeneID" id="8617886"/>
<dbReference type="KEGG" id="ddi:DDB_G0271140"/>
<dbReference type="dictyBase" id="DDB_G0271140">
    <property type="gene designation" value="abcA7"/>
</dbReference>
<dbReference type="VEuPathDB" id="AmoebaDB:DDB_G0271140"/>
<dbReference type="eggNOG" id="KOG0059">
    <property type="taxonomic scope" value="Eukaryota"/>
</dbReference>
<dbReference type="HOGENOM" id="CLU_000604_19_5_1"/>
<dbReference type="InParanoid" id="Q8T6J0"/>
<dbReference type="OMA" id="SIQRGQC"/>
<dbReference type="PhylomeDB" id="Q8T6J0"/>
<dbReference type="PRO" id="PR:Q8T6J0"/>
<dbReference type="Proteomes" id="UP000002195">
    <property type="component" value="Chromosome 2"/>
</dbReference>
<dbReference type="GO" id="GO:0043231">
    <property type="term" value="C:intracellular membrane-bounded organelle"/>
    <property type="evidence" value="ECO:0000318"/>
    <property type="project" value="GO_Central"/>
</dbReference>
<dbReference type="GO" id="GO:0016020">
    <property type="term" value="C:membrane"/>
    <property type="evidence" value="ECO:0007669"/>
    <property type="project" value="UniProtKB-SubCell"/>
</dbReference>
<dbReference type="GO" id="GO:0140359">
    <property type="term" value="F:ABC-type transporter activity"/>
    <property type="evidence" value="ECO:0007669"/>
    <property type="project" value="InterPro"/>
</dbReference>
<dbReference type="GO" id="GO:0005524">
    <property type="term" value="F:ATP binding"/>
    <property type="evidence" value="ECO:0007669"/>
    <property type="project" value="UniProtKB-KW"/>
</dbReference>
<dbReference type="GO" id="GO:0016887">
    <property type="term" value="F:ATP hydrolysis activity"/>
    <property type="evidence" value="ECO:0007669"/>
    <property type="project" value="InterPro"/>
</dbReference>
<dbReference type="GO" id="GO:0042626">
    <property type="term" value="F:ATPase-coupled transmembrane transporter activity"/>
    <property type="evidence" value="ECO:0000318"/>
    <property type="project" value="GO_Central"/>
</dbReference>
<dbReference type="GO" id="GO:0005319">
    <property type="term" value="F:lipid transporter activity"/>
    <property type="evidence" value="ECO:0000318"/>
    <property type="project" value="GO_Central"/>
</dbReference>
<dbReference type="GO" id="GO:0006869">
    <property type="term" value="P:lipid transport"/>
    <property type="evidence" value="ECO:0000318"/>
    <property type="project" value="GO_Central"/>
</dbReference>
<dbReference type="GO" id="GO:0030587">
    <property type="term" value="P:sorocarp development"/>
    <property type="evidence" value="ECO:0000270"/>
    <property type="project" value="dictyBase"/>
</dbReference>
<dbReference type="GO" id="GO:0031288">
    <property type="term" value="P:sorocarp morphogenesis"/>
    <property type="evidence" value="ECO:0000318"/>
    <property type="project" value="GO_Central"/>
</dbReference>
<dbReference type="CDD" id="cd03263">
    <property type="entry name" value="ABC_subfamily_A"/>
    <property type="match status" value="1"/>
</dbReference>
<dbReference type="FunFam" id="3.40.50.300:FF:000665">
    <property type="entry name" value="ABC transporter A family member 2"/>
    <property type="match status" value="1"/>
</dbReference>
<dbReference type="Gene3D" id="3.40.50.300">
    <property type="entry name" value="P-loop containing nucleotide triphosphate hydrolases"/>
    <property type="match status" value="1"/>
</dbReference>
<dbReference type="InterPro" id="IPR003593">
    <property type="entry name" value="AAA+_ATPase"/>
</dbReference>
<dbReference type="InterPro" id="IPR013525">
    <property type="entry name" value="ABC2_TM"/>
</dbReference>
<dbReference type="InterPro" id="IPR003439">
    <property type="entry name" value="ABC_transporter-like_ATP-bd"/>
</dbReference>
<dbReference type="InterPro" id="IPR017871">
    <property type="entry name" value="ABC_transporter-like_CS"/>
</dbReference>
<dbReference type="InterPro" id="IPR026082">
    <property type="entry name" value="ABCA"/>
</dbReference>
<dbReference type="InterPro" id="IPR027417">
    <property type="entry name" value="P-loop_NTPase"/>
</dbReference>
<dbReference type="InterPro" id="IPR056264">
    <property type="entry name" value="R2_ABCA1-4-like"/>
</dbReference>
<dbReference type="PANTHER" id="PTHR19229:SF272">
    <property type="entry name" value="ABC TRANSPORTER A FAMILY MEMBER 7-RELATED"/>
    <property type="match status" value="1"/>
</dbReference>
<dbReference type="PANTHER" id="PTHR19229">
    <property type="entry name" value="ATP-BINDING CASSETTE TRANSPORTER SUBFAMILY A ABCA"/>
    <property type="match status" value="1"/>
</dbReference>
<dbReference type="Pfam" id="PF12698">
    <property type="entry name" value="ABC2_membrane_3"/>
    <property type="match status" value="1"/>
</dbReference>
<dbReference type="Pfam" id="PF00005">
    <property type="entry name" value="ABC_tran"/>
    <property type="match status" value="1"/>
</dbReference>
<dbReference type="Pfam" id="PF23321">
    <property type="entry name" value="R1_ABCA1"/>
    <property type="match status" value="1"/>
</dbReference>
<dbReference type="SMART" id="SM00382">
    <property type="entry name" value="AAA"/>
    <property type="match status" value="1"/>
</dbReference>
<dbReference type="SUPFAM" id="SSF52540">
    <property type="entry name" value="P-loop containing nucleoside triphosphate hydrolases"/>
    <property type="match status" value="1"/>
</dbReference>
<dbReference type="PROSITE" id="PS00211">
    <property type="entry name" value="ABC_TRANSPORTER_1"/>
    <property type="match status" value="1"/>
</dbReference>
<dbReference type="PROSITE" id="PS50893">
    <property type="entry name" value="ABC_TRANSPORTER_2"/>
    <property type="match status" value="1"/>
</dbReference>
<accession>Q8T6J0</accession>
<accession>Q55BB9</accession>
<feature type="chain" id="PRO_0000363839" description="ABC transporter A family member 7">
    <location>
        <begin position="1"/>
        <end position="839"/>
    </location>
</feature>
<feature type="transmembrane region" description="Helical" evidence="1">
    <location>
        <begin position="30"/>
        <end position="50"/>
    </location>
</feature>
<feature type="transmembrane region" description="Helical" evidence="1">
    <location>
        <begin position="238"/>
        <end position="258"/>
    </location>
</feature>
<feature type="transmembrane region" description="Helical" evidence="1">
    <location>
        <begin position="286"/>
        <end position="306"/>
    </location>
</feature>
<feature type="transmembrane region" description="Helical" evidence="1">
    <location>
        <begin position="321"/>
        <end position="341"/>
    </location>
</feature>
<feature type="transmembrane region" description="Helical" evidence="1">
    <location>
        <begin position="352"/>
        <end position="372"/>
    </location>
</feature>
<feature type="transmembrane region" description="Helical" evidence="1">
    <location>
        <begin position="378"/>
        <end position="398"/>
    </location>
</feature>
<feature type="transmembrane region" description="Helical" evidence="1">
    <location>
        <begin position="419"/>
        <end position="439"/>
    </location>
</feature>
<feature type="domain" description="ABC transporter" evidence="2">
    <location>
        <begin position="525"/>
        <end position="756"/>
    </location>
</feature>
<feature type="binding site" evidence="2">
    <location>
        <begin position="559"/>
        <end position="566"/>
    </location>
    <ligand>
        <name>ATP</name>
        <dbReference type="ChEBI" id="CHEBI:30616"/>
    </ligand>
</feature>